<keyword id="KW-0030">Aminoacyl-tRNA synthetase</keyword>
<keyword id="KW-0067">ATP-binding</keyword>
<keyword id="KW-0963">Cytoplasm</keyword>
<keyword id="KW-0436">Ligase</keyword>
<keyword id="KW-0479">Metal-binding</keyword>
<keyword id="KW-0547">Nucleotide-binding</keyword>
<keyword id="KW-0648">Protein biosynthesis</keyword>
<keyword id="KW-1185">Reference proteome</keyword>
<keyword id="KW-0694">RNA-binding</keyword>
<keyword id="KW-0820">tRNA-binding</keyword>
<keyword id="KW-0862">Zinc</keyword>
<dbReference type="EC" id="6.1.1.10" evidence="1"/>
<dbReference type="EMBL" id="AE004437">
    <property type="protein sequence ID" value="AAG18903.1"/>
    <property type="molecule type" value="Genomic_DNA"/>
</dbReference>
<dbReference type="PIR" id="C84192">
    <property type="entry name" value="C84192"/>
</dbReference>
<dbReference type="RefSeq" id="WP_010902197.1">
    <property type="nucleotide sequence ID" value="NC_002607.1"/>
</dbReference>
<dbReference type="SMR" id="Q9HSA4"/>
<dbReference type="FunCoup" id="Q9HSA4">
    <property type="interactions" value="221"/>
</dbReference>
<dbReference type="STRING" id="64091.VNG_0326G"/>
<dbReference type="PaxDb" id="64091-VNG_0326G"/>
<dbReference type="GeneID" id="68693270"/>
<dbReference type="KEGG" id="hal:VNG_0326G"/>
<dbReference type="PATRIC" id="fig|64091.14.peg.242"/>
<dbReference type="HOGENOM" id="CLU_009710_1_2_2"/>
<dbReference type="InParanoid" id="Q9HSA4"/>
<dbReference type="OrthoDB" id="371856at2157"/>
<dbReference type="PhylomeDB" id="Q9HSA4"/>
<dbReference type="Proteomes" id="UP000000554">
    <property type="component" value="Chromosome"/>
</dbReference>
<dbReference type="GO" id="GO:0017101">
    <property type="term" value="C:aminoacyl-tRNA synthetase multienzyme complex"/>
    <property type="evidence" value="ECO:0000318"/>
    <property type="project" value="GO_Central"/>
</dbReference>
<dbReference type="GO" id="GO:0005829">
    <property type="term" value="C:cytosol"/>
    <property type="evidence" value="ECO:0000318"/>
    <property type="project" value="GO_Central"/>
</dbReference>
<dbReference type="GO" id="GO:0005524">
    <property type="term" value="F:ATP binding"/>
    <property type="evidence" value="ECO:0007669"/>
    <property type="project" value="UniProtKB-UniRule"/>
</dbReference>
<dbReference type="GO" id="GO:0046872">
    <property type="term" value="F:metal ion binding"/>
    <property type="evidence" value="ECO:0007669"/>
    <property type="project" value="UniProtKB-KW"/>
</dbReference>
<dbReference type="GO" id="GO:0004825">
    <property type="term" value="F:methionine-tRNA ligase activity"/>
    <property type="evidence" value="ECO:0000318"/>
    <property type="project" value="GO_Central"/>
</dbReference>
<dbReference type="GO" id="GO:0000049">
    <property type="term" value="F:tRNA binding"/>
    <property type="evidence" value="ECO:0007669"/>
    <property type="project" value="UniProtKB-KW"/>
</dbReference>
<dbReference type="GO" id="GO:0006431">
    <property type="term" value="P:methionyl-tRNA aminoacylation"/>
    <property type="evidence" value="ECO:0000318"/>
    <property type="project" value="GO_Central"/>
</dbReference>
<dbReference type="CDD" id="cd07957">
    <property type="entry name" value="Anticodon_Ia_Met"/>
    <property type="match status" value="1"/>
</dbReference>
<dbReference type="CDD" id="cd00814">
    <property type="entry name" value="MetRS_core"/>
    <property type="match status" value="1"/>
</dbReference>
<dbReference type="CDD" id="cd02800">
    <property type="entry name" value="tRNA_bind_EcMetRS_like"/>
    <property type="match status" value="1"/>
</dbReference>
<dbReference type="FunFam" id="2.20.28.20:FF:000001">
    <property type="entry name" value="Methionine--tRNA ligase"/>
    <property type="match status" value="1"/>
</dbReference>
<dbReference type="Gene3D" id="3.40.50.620">
    <property type="entry name" value="HUPs"/>
    <property type="match status" value="1"/>
</dbReference>
<dbReference type="Gene3D" id="1.10.730.10">
    <property type="entry name" value="Isoleucyl-tRNA Synthetase, Domain 1"/>
    <property type="match status" value="1"/>
</dbReference>
<dbReference type="Gene3D" id="2.20.28.20">
    <property type="entry name" value="Methionyl-tRNA synthetase, Zn-domain"/>
    <property type="match status" value="1"/>
</dbReference>
<dbReference type="Gene3D" id="2.40.50.140">
    <property type="entry name" value="Nucleic acid-binding proteins"/>
    <property type="match status" value="1"/>
</dbReference>
<dbReference type="HAMAP" id="MF_00098">
    <property type="entry name" value="Met_tRNA_synth_type1"/>
    <property type="match status" value="1"/>
</dbReference>
<dbReference type="InterPro" id="IPR001412">
    <property type="entry name" value="aa-tRNA-synth_I_CS"/>
</dbReference>
<dbReference type="InterPro" id="IPR041872">
    <property type="entry name" value="Anticodon_Met"/>
</dbReference>
<dbReference type="InterPro" id="IPR004495">
    <property type="entry name" value="Met-tRNA-synth_bsu_C"/>
</dbReference>
<dbReference type="InterPro" id="IPR023458">
    <property type="entry name" value="Met-tRNA_ligase_1"/>
</dbReference>
<dbReference type="InterPro" id="IPR014758">
    <property type="entry name" value="Met-tRNA_synth"/>
</dbReference>
<dbReference type="InterPro" id="IPR015413">
    <property type="entry name" value="Methionyl/Leucyl_tRNA_Synth"/>
</dbReference>
<dbReference type="InterPro" id="IPR033911">
    <property type="entry name" value="MetRS_core"/>
</dbReference>
<dbReference type="InterPro" id="IPR029038">
    <property type="entry name" value="MetRS_Zn"/>
</dbReference>
<dbReference type="InterPro" id="IPR012340">
    <property type="entry name" value="NA-bd_OB-fold"/>
</dbReference>
<dbReference type="InterPro" id="IPR014729">
    <property type="entry name" value="Rossmann-like_a/b/a_fold"/>
</dbReference>
<dbReference type="InterPro" id="IPR002547">
    <property type="entry name" value="tRNA-bd_dom"/>
</dbReference>
<dbReference type="InterPro" id="IPR009080">
    <property type="entry name" value="tRNAsynth_Ia_anticodon-bd"/>
</dbReference>
<dbReference type="NCBIfam" id="TIGR00398">
    <property type="entry name" value="metG"/>
    <property type="match status" value="1"/>
</dbReference>
<dbReference type="NCBIfam" id="NF001100">
    <property type="entry name" value="PRK00133.1"/>
    <property type="match status" value="1"/>
</dbReference>
<dbReference type="PANTHER" id="PTHR45765">
    <property type="entry name" value="METHIONINE--TRNA LIGASE"/>
    <property type="match status" value="1"/>
</dbReference>
<dbReference type="PANTHER" id="PTHR45765:SF1">
    <property type="entry name" value="METHIONINE--TRNA LIGASE, CYTOPLASMIC"/>
    <property type="match status" value="1"/>
</dbReference>
<dbReference type="Pfam" id="PF19303">
    <property type="entry name" value="Anticodon_3"/>
    <property type="match status" value="1"/>
</dbReference>
<dbReference type="Pfam" id="PF09334">
    <property type="entry name" value="tRNA-synt_1g"/>
    <property type="match status" value="1"/>
</dbReference>
<dbReference type="Pfam" id="PF01588">
    <property type="entry name" value="tRNA_bind"/>
    <property type="match status" value="1"/>
</dbReference>
<dbReference type="PRINTS" id="PR01041">
    <property type="entry name" value="TRNASYNTHMET"/>
</dbReference>
<dbReference type="SUPFAM" id="SSF47323">
    <property type="entry name" value="Anticodon-binding domain of a subclass of class I aminoacyl-tRNA synthetases"/>
    <property type="match status" value="1"/>
</dbReference>
<dbReference type="SUPFAM" id="SSF57770">
    <property type="entry name" value="Methionyl-tRNA synthetase (MetRS), Zn-domain"/>
    <property type="match status" value="1"/>
</dbReference>
<dbReference type="SUPFAM" id="SSF50249">
    <property type="entry name" value="Nucleic acid-binding proteins"/>
    <property type="match status" value="1"/>
</dbReference>
<dbReference type="SUPFAM" id="SSF52374">
    <property type="entry name" value="Nucleotidylyl transferase"/>
    <property type="match status" value="1"/>
</dbReference>
<dbReference type="PROSITE" id="PS00178">
    <property type="entry name" value="AA_TRNA_LIGASE_I"/>
    <property type="match status" value="1"/>
</dbReference>
<dbReference type="PROSITE" id="PS50886">
    <property type="entry name" value="TRBD"/>
    <property type="match status" value="1"/>
</dbReference>
<organism>
    <name type="scientific">Halobacterium salinarum (strain ATCC 700922 / JCM 11081 / NRC-1)</name>
    <name type="common">Halobacterium halobium</name>
    <dbReference type="NCBI Taxonomy" id="64091"/>
    <lineage>
        <taxon>Archaea</taxon>
        <taxon>Methanobacteriati</taxon>
        <taxon>Methanobacteriota</taxon>
        <taxon>Stenosarchaea group</taxon>
        <taxon>Halobacteria</taxon>
        <taxon>Halobacteriales</taxon>
        <taxon>Halobacteriaceae</taxon>
        <taxon>Halobacterium</taxon>
        <taxon>Halobacterium salinarum NRC-34001</taxon>
    </lineage>
</organism>
<comment type="function">
    <text evidence="1">Is required not only for elongation of protein synthesis but also for the initiation of all mRNA translation through initiator tRNA(fMet) aminoacylation.</text>
</comment>
<comment type="catalytic activity">
    <reaction evidence="1">
        <text>tRNA(Met) + L-methionine + ATP = L-methionyl-tRNA(Met) + AMP + diphosphate</text>
        <dbReference type="Rhea" id="RHEA:13481"/>
        <dbReference type="Rhea" id="RHEA-COMP:9667"/>
        <dbReference type="Rhea" id="RHEA-COMP:9698"/>
        <dbReference type="ChEBI" id="CHEBI:30616"/>
        <dbReference type="ChEBI" id="CHEBI:33019"/>
        <dbReference type="ChEBI" id="CHEBI:57844"/>
        <dbReference type="ChEBI" id="CHEBI:78442"/>
        <dbReference type="ChEBI" id="CHEBI:78530"/>
        <dbReference type="ChEBI" id="CHEBI:456215"/>
        <dbReference type="EC" id="6.1.1.10"/>
    </reaction>
</comment>
<comment type="cofactor">
    <cofactor evidence="1">
        <name>Zn(2+)</name>
        <dbReference type="ChEBI" id="CHEBI:29105"/>
    </cofactor>
    <text evidence="1">Binds 1 zinc ion per subunit.</text>
</comment>
<comment type="subunit">
    <text evidence="1">Homodimer.</text>
</comment>
<comment type="subcellular location">
    <subcellularLocation>
        <location evidence="1">Cytoplasm</location>
    </subcellularLocation>
</comment>
<comment type="similarity">
    <text evidence="1">Belongs to the class-I aminoacyl-tRNA synthetase family. MetG type 1 subfamily.</text>
</comment>
<name>SYM_HALSA</name>
<reference key="1">
    <citation type="journal article" date="2000" name="Proc. Natl. Acad. Sci. U.S.A.">
        <title>Genome sequence of Halobacterium species NRC-1.</title>
        <authorList>
            <person name="Ng W.V."/>
            <person name="Kennedy S.P."/>
            <person name="Mahairas G.G."/>
            <person name="Berquist B."/>
            <person name="Pan M."/>
            <person name="Shukla H.D."/>
            <person name="Lasky S.R."/>
            <person name="Baliga N.S."/>
            <person name="Thorsson V."/>
            <person name="Sbrogna J."/>
            <person name="Swartzell S."/>
            <person name="Weir D."/>
            <person name="Hall J."/>
            <person name="Dahl T.A."/>
            <person name="Welti R."/>
            <person name="Goo Y.A."/>
            <person name="Leithauser B."/>
            <person name="Keller K."/>
            <person name="Cruz R."/>
            <person name="Danson M.J."/>
            <person name="Hough D.W."/>
            <person name="Maddocks D.G."/>
            <person name="Jablonski P.E."/>
            <person name="Krebs M.P."/>
            <person name="Angevine C.M."/>
            <person name="Dale H."/>
            <person name="Isenbarger T.A."/>
            <person name="Peck R.F."/>
            <person name="Pohlschroder M."/>
            <person name="Spudich J.L."/>
            <person name="Jung K.-H."/>
            <person name="Alam M."/>
            <person name="Freitas T."/>
            <person name="Hou S."/>
            <person name="Daniels C.J."/>
            <person name="Dennis P.P."/>
            <person name="Omer A.D."/>
            <person name="Ebhardt H."/>
            <person name="Lowe T.M."/>
            <person name="Liang P."/>
            <person name="Riley M."/>
            <person name="Hood L."/>
            <person name="DasSarma S."/>
        </authorList>
    </citation>
    <scope>NUCLEOTIDE SEQUENCE [LARGE SCALE GENOMIC DNA]</scope>
    <source>
        <strain>ATCC 700922 / JCM 11081 / NRC-1</strain>
    </source>
</reference>
<protein>
    <recommendedName>
        <fullName evidence="1">Methionine--tRNA ligase</fullName>
        <ecNumber evidence="1">6.1.1.10</ecNumber>
    </recommendedName>
    <alternativeName>
        <fullName evidence="1">Methionyl-tRNA synthetase</fullName>
        <shortName evidence="1">MetRS</shortName>
    </alternativeName>
</protein>
<sequence>MTDEDYPTDDPAVVTCGLPYPTGDLHIGHLRTYVSGDAFSRALRKLGQETVFVSGTDMHGTPIAVQAIEAGVGPLDLGLERHEQYADTFEEFSVAFDTYGHTDEETNVELTREFVGAWEDNDHVYETEIQVAYDPDADQWLPDRYVEGTCPYCGEHARGDECDEGCQRHLEPGEIEAPVSTITGNSAEYHERAHKFLRLSDFQEYLEGFINRMEGTNNAKNQPREWIEGGLEDFCITRDLDWGIDYPGEGGDDLVLYVWVDAPIEYVAATKQYSERVGTEEFDWASVWKDGDGEIIHVIGRDIIQHHTVFWPSMLAGADYAEPRAVCATGFVNIDGRGLSTSKNRAIWAAEYLDAGFHPDLLRYYLATASGFERDVNFSWAEFAQRVNTELADAVGNFAYRALLFANRNFDGTPQEVSLTDDVETEIAQAMDDYEDALNEYDLRTAGERAVALARFGNEYIQHNEPWNLDSEAAAPVMRDCVQLVKAVAVLLQPFLPEKTETLWAQLGEDGRVSDATIADCLQAPPAEFGEPAELFEKIEDDRVTELDEALAAKIEAASSEDADGEGMADETADDGIELEPLAEDDISFEEFQALDLRVGEVVEAEGIEGADDLARLEVDIGHEVRQIVAGIKQLHDLDALPGTRVVVVANMEPSELFGVESNGMVLAAGEDADLLTTHEDSEPGTKVM</sequence>
<feature type="chain" id="PRO_0000139185" description="Methionine--tRNA ligase">
    <location>
        <begin position="1"/>
        <end position="689"/>
    </location>
</feature>
<feature type="domain" description="tRNA-binding" evidence="1">
    <location>
        <begin position="591"/>
        <end position="689"/>
    </location>
</feature>
<feature type="short sequence motif" description="'HIGH' region">
    <location>
        <begin position="19"/>
        <end position="29"/>
    </location>
</feature>
<feature type="short sequence motif" description="'KMSKS' region">
    <location>
        <begin position="338"/>
        <end position="342"/>
    </location>
</feature>
<feature type="binding site" evidence="1">
    <location>
        <position position="150"/>
    </location>
    <ligand>
        <name>Zn(2+)</name>
        <dbReference type="ChEBI" id="CHEBI:29105"/>
    </ligand>
</feature>
<feature type="binding site" evidence="1">
    <location>
        <position position="153"/>
    </location>
    <ligand>
        <name>Zn(2+)</name>
        <dbReference type="ChEBI" id="CHEBI:29105"/>
    </ligand>
</feature>
<feature type="binding site" evidence="1">
    <location>
        <position position="162"/>
    </location>
    <ligand>
        <name>Zn(2+)</name>
        <dbReference type="ChEBI" id="CHEBI:29105"/>
    </ligand>
</feature>
<feature type="binding site" evidence="1">
    <location>
        <position position="166"/>
    </location>
    <ligand>
        <name>Zn(2+)</name>
        <dbReference type="ChEBI" id="CHEBI:29105"/>
    </ligand>
</feature>
<feature type="binding site" evidence="1">
    <location>
        <position position="341"/>
    </location>
    <ligand>
        <name>ATP</name>
        <dbReference type="ChEBI" id="CHEBI:30616"/>
    </ligand>
</feature>
<proteinExistence type="inferred from homology"/>
<gene>
    <name evidence="1" type="primary">metG</name>
    <name type="synonym">metS</name>
    <name type="ordered locus">VNG_0326G</name>
</gene>
<evidence type="ECO:0000255" key="1">
    <source>
        <dbReference type="HAMAP-Rule" id="MF_00098"/>
    </source>
</evidence>
<accession>Q9HSA4</accession>